<gene>
    <name evidence="2" type="primary">psaC</name>
</gene>
<name>PSAC_SOYBN</name>
<keyword id="KW-0004">4Fe-4S</keyword>
<keyword id="KW-0150">Chloroplast</keyword>
<keyword id="KW-0249">Electron transport</keyword>
<keyword id="KW-0408">Iron</keyword>
<keyword id="KW-0411">Iron-sulfur</keyword>
<keyword id="KW-0472">Membrane</keyword>
<keyword id="KW-0479">Metal-binding</keyword>
<keyword id="KW-0560">Oxidoreductase</keyword>
<keyword id="KW-0602">Photosynthesis</keyword>
<keyword id="KW-0603">Photosystem I</keyword>
<keyword id="KW-0934">Plastid</keyword>
<keyword id="KW-1185">Reference proteome</keyword>
<keyword id="KW-0677">Repeat</keyword>
<keyword id="KW-0793">Thylakoid</keyword>
<keyword id="KW-0813">Transport</keyword>
<sequence>MSHSVKIYDTCIGCTQCVRACPTDVLEMIPWDGCKAKQIASAPRTEDCVGCKRCESACPTDFLSVRVYLWHETTRSMGLAY</sequence>
<proteinExistence type="inferred from homology"/>
<feature type="initiator methionine" description="Removed" evidence="1">
    <location>
        <position position="1"/>
    </location>
</feature>
<feature type="chain" id="PRO_0000275981" description="Photosystem I iron-sulfur center">
    <location>
        <begin position="2"/>
        <end position="81"/>
    </location>
</feature>
<feature type="domain" description="4Fe-4S ferredoxin-type 1" evidence="2">
    <location>
        <begin position="2"/>
        <end position="31"/>
    </location>
</feature>
<feature type="domain" description="4Fe-4S ferredoxin-type 2" evidence="2">
    <location>
        <begin position="39"/>
        <end position="68"/>
    </location>
</feature>
<feature type="binding site" evidence="2">
    <location>
        <position position="11"/>
    </location>
    <ligand>
        <name>[4Fe-4S] cluster</name>
        <dbReference type="ChEBI" id="CHEBI:49883"/>
        <label>1</label>
    </ligand>
</feature>
<feature type="binding site" evidence="2">
    <location>
        <position position="14"/>
    </location>
    <ligand>
        <name>[4Fe-4S] cluster</name>
        <dbReference type="ChEBI" id="CHEBI:49883"/>
        <label>1</label>
    </ligand>
</feature>
<feature type="binding site" evidence="2">
    <location>
        <position position="17"/>
    </location>
    <ligand>
        <name>[4Fe-4S] cluster</name>
        <dbReference type="ChEBI" id="CHEBI:49883"/>
        <label>1</label>
    </ligand>
</feature>
<feature type="binding site" evidence="2">
    <location>
        <position position="21"/>
    </location>
    <ligand>
        <name>[4Fe-4S] cluster</name>
        <dbReference type="ChEBI" id="CHEBI:49883"/>
        <label>2</label>
    </ligand>
</feature>
<feature type="binding site" evidence="2">
    <location>
        <position position="48"/>
    </location>
    <ligand>
        <name>[4Fe-4S] cluster</name>
        <dbReference type="ChEBI" id="CHEBI:49883"/>
        <label>2</label>
    </ligand>
</feature>
<feature type="binding site" evidence="2">
    <location>
        <position position="51"/>
    </location>
    <ligand>
        <name>[4Fe-4S] cluster</name>
        <dbReference type="ChEBI" id="CHEBI:49883"/>
        <label>2</label>
    </ligand>
</feature>
<feature type="binding site" evidence="2">
    <location>
        <position position="54"/>
    </location>
    <ligand>
        <name>[4Fe-4S] cluster</name>
        <dbReference type="ChEBI" id="CHEBI:49883"/>
        <label>2</label>
    </ligand>
</feature>
<feature type="binding site" evidence="2">
    <location>
        <position position="58"/>
    </location>
    <ligand>
        <name>[4Fe-4S] cluster</name>
        <dbReference type="ChEBI" id="CHEBI:49883"/>
        <label>1</label>
    </ligand>
</feature>
<organism>
    <name type="scientific">Glycine max</name>
    <name type="common">Soybean</name>
    <name type="synonym">Glycine hispida</name>
    <dbReference type="NCBI Taxonomy" id="3847"/>
    <lineage>
        <taxon>Eukaryota</taxon>
        <taxon>Viridiplantae</taxon>
        <taxon>Streptophyta</taxon>
        <taxon>Embryophyta</taxon>
        <taxon>Tracheophyta</taxon>
        <taxon>Spermatophyta</taxon>
        <taxon>Magnoliopsida</taxon>
        <taxon>eudicotyledons</taxon>
        <taxon>Gunneridae</taxon>
        <taxon>Pentapetalae</taxon>
        <taxon>rosids</taxon>
        <taxon>fabids</taxon>
        <taxon>Fabales</taxon>
        <taxon>Fabaceae</taxon>
        <taxon>Papilionoideae</taxon>
        <taxon>50 kb inversion clade</taxon>
        <taxon>NPAAA clade</taxon>
        <taxon>indigoferoid/millettioid clade</taxon>
        <taxon>Phaseoleae</taxon>
        <taxon>Glycine</taxon>
        <taxon>Glycine subgen. Soja</taxon>
    </lineage>
</organism>
<reference key="1">
    <citation type="journal article" date="2005" name="Plant Mol. Biol.">
        <title>Complete chloroplast genome sequence of Glycine max and comparative analyses with other legume genomes.</title>
        <authorList>
            <person name="Saski C."/>
            <person name="Lee S.-B."/>
            <person name="Daniell H."/>
            <person name="Wood T.C."/>
            <person name="Tomkins J."/>
            <person name="Kim H.-G."/>
            <person name="Jansen R.K."/>
        </authorList>
    </citation>
    <scope>NUCLEOTIDE SEQUENCE [LARGE SCALE GENOMIC DNA]</scope>
    <source>
        <strain>cv. PI 437654</strain>
    </source>
</reference>
<evidence type="ECO:0000250" key="1"/>
<evidence type="ECO:0000255" key="2">
    <source>
        <dbReference type="HAMAP-Rule" id="MF_01303"/>
    </source>
</evidence>
<geneLocation type="chloroplast"/>
<comment type="function">
    <text evidence="2">Apoprotein for the two 4Fe-4S centers FA and FB of photosystem I (PSI); essential for photochemical activity. FB is the terminal electron acceptor of PSI, donating electrons to ferredoxin. The C-terminus interacts with PsaA/B/D and helps assemble the protein into the PSI complex. Required for binding of PsaD and PsaE to PSI. PSI is a plastocyanin-ferredoxin oxidoreductase, converting photonic excitation into a charge separation, which transfers an electron from the donor P700 chlorophyll pair to the spectroscopically characterized acceptors A0, A1, FX, FA and FB in turn.</text>
</comment>
<comment type="catalytic activity">
    <reaction evidence="2">
        <text>reduced [plastocyanin] + hnu + oxidized [2Fe-2S]-[ferredoxin] = oxidized [plastocyanin] + reduced [2Fe-2S]-[ferredoxin]</text>
        <dbReference type="Rhea" id="RHEA:30407"/>
        <dbReference type="Rhea" id="RHEA-COMP:10000"/>
        <dbReference type="Rhea" id="RHEA-COMP:10001"/>
        <dbReference type="Rhea" id="RHEA-COMP:10039"/>
        <dbReference type="Rhea" id="RHEA-COMP:10040"/>
        <dbReference type="ChEBI" id="CHEBI:29036"/>
        <dbReference type="ChEBI" id="CHEBI:30212"/>
        <dbReference type="ChEBI" id="CHEBI:33737"/>
        <dbReference type="ChEBI" id="CHEBI:33738"/>
        <dbReference type="ChEBI" id="CHEBI:49552"/>
        <dbReference type="EC" id="1.97.1.12"/>
    </reaction>
</comment>
<comment type="cofactor">
    <cofactor evidence="2">
        <name>[4Fe-4S] cluster</name>
        <dbReference type="ChEBI" id="CHEBI:49883"/>
    </cofactor>
    <text evidence="2">Binds 2 [4Fe-4S] clusters. Cluster 2 is most probably the spectroscopically characterized electron acceptor FA and cluster 1 is most probably FB.</text>
</comment>
<comment type="subunit">
    <text evidence="2">The eukaryotic PSI reaction center is composed of at least 11 subunits.</text>
</comment>
<comment type="subcellular location">
    <subcellularLocation>
        <location evidence="2">Plastid</location>
        <location evidence="2">Chloroplast thylakoid membrane</location>
        <topology evidence="2">Peripheral membrane protein</topology>
        <orientation evidence="2">Stromal side</orientation>
    </subcellularLocation>
</comment>
<dbReference type="EC" id="1.97.1.12" evidence="2"/>
<dbReference type="EMBL" id="DQ317523">
    <property type="protein sequence ID" value="ABC25176.1"/>
    <property type="molecule type" value="Genomic_DNA"/>
</dbReference>
<dbReference type="RefSeq" id="YP_538817.1">
    <property type="nucleotide sequence ID" value="NC_007942.1"/>
</dbReference>
<dbReference type="SMR" id="Q2PMN3"/>
<dbReference type="FunCoup" id="Q2PMN3">
    <property type="interactions" value="435"/>
</dbReference>
<dbReference type="STRING" id="3847.Q2PMN3"/>
<dbReference type="PaxDb" id="3847-GLYMA13G01891.1"/>
<dbReference type="ProMEX" id="Q2PMN3"/>
<dbReference type="GeneID" id="3989360"/>
<dbReference type="KEGG" id="gmx:3989360"/>
<dbReference type="InParanoid" id="Q2PMN3"/>
<dbReference type="Proteomes" id="UP000008827">
    <property type="component" value="Chloroplast"/>
</dbReference>
<dbReference type="GO" id="GO:0009535">
    <property type="term" value="C:chloroplast thylakoid membrane"/>
    <property type="evidence" value="ECO:0007669"/>
    <property type="project" value="UniProtKB-SubCell"/>
</dbReference>
<dbReference type="GO" id="GO:0009522">
    <property type="term" value="C:photosystem I"/>
    <property type="evidence" value="ECO:0007669"/>
    <property type="project" value="UniProtKB-KW"/>
</dbReference>
<dbReference type="GO" id="GO:0051539">
    <property type="term" value="F:4 iron, 4 sulfur cluster binding"/>
    <property type="evidence" value="ECO:0007669"/>
    <property type="project" value="UniProtKB-KW"/>
</dbReference>
<dbReference type="GO" id="GO:0009055">
    <property type="term" value="F:electron transfer activity"/>
    <property type="evidence" value="ECO:0007669"/>
    <property type="project" value="UniProtKB-UniRule"/>
</dbReference>
<dbReference type="GO" id="GO:0046872">
    <property type="term" value="F:metal ion binding"/>
    <property type="evidence" value="ECO:0007669"/>
    <property type="project" value="UniProtKB-KW"/>
</dbReference>
<dbReference type="GO" id="GO:0016491">
    <property type="term" value="F:oxidoreductase activity"/>
    <property type="evidence" value="ECO:0007669"/>
    <property type="project" value="UniProtKB-KW"/>
</dbReference>
<dbReference type="GO" id="GO:0015979">
    <property type="term" value="P:photosynthesis"/>
    <property type="evidence" value="ECO:0000318"/>
    <property type="project" value="GO_Central"/>
</dbReference>
<dbReference type="GO" id="GO:0009773">
    <property type="term" value="P:photosynthetic electron transport in photosystem I"/>
    <property type="evidence" value="ECO:0007669"/>
    <property type="project" value="InterPro"/>
</dbReference>
<dbReference type="FunFam" id="3.30.70.20:FF:000001">
    <property type="entry name" value="Photosystem I iron-sulfur center"/>
    <property type="match status" value="1"/>
</dbReference>
<dbReference type="Gene3D" id="3.30.70.20">
    <property type="match status" value="1"/>
</dbReference>
<dbReference type="HAMAP" id="MF_01303">
    <property type="entry name" value="PSI_PsaC"/>
    <property type="match status" value="1"/>
</dbReference>
<dbReference type="InterPro" id="IPR017896">
    <property type="entry name" value="4Fe4S_Fe-S-bd"/>
</dbReference>
<dbReference type="InterPro" id="IPR017900">
    <property type="entry name" value="4Fe4S_Fe_S_CS"/>
</dbReference>
<dbReference type="InterPro" id="IPR050157">
    <property type="entry name" value="PSI_iron-sulfur_center"/>
</dbReference>
<dbReference type="InterPro" id="IPR017491">
    <property type="entry name" value="PSI_PsaC"/>
</dbReference>
<dbReference type="NCBIfam" id="TIGR03048">
    <property type="entry name" value="PS_I_psaC"/>
    <property type="match status" value="1"/>
</dbReference>
<dbReference type="PANTHER" id="PTHR24960:SF79">
    <property type="entry name" value="PHOTOSYSTEM I IRON-SULFUR CENTER"/>
    <property type="match status" value="1"/>
</dbReference>
<dbReference type="PANTHER" id="PTHR24960">
    <property type="entry name" value="PHOTOSYSTEM I IRON-SULFUR CENTER-RELATED"/>
    <property type="match status" value="1"/>
</dbReference>
<dbReference type="Pfam" id="PF14697">
    <property type="entry name" value="Fer4_21"/>
    <property type="match status" value="1"/>
</dbReference>
<dbReference type="SUPFAM" id="SSF54862">
    <property type="entry name" value="4Fe-4S ferredoxins"/>
    <property type="match status" value="1"/>
</dbReference>
<dbReference type="PROSITE" id="PS00198">
    <property type="entry name" value="4FE4S_FER_1"/>
    <property type="match status" value="2"/>
</dbReference>
<dbReference type="PROSITE" id="PS51379">
    <property type="entry name" value="4FE4S_FER_2"/>
    <property type="match status" value="2"/>
</dbReference>
<accession>Q2PMN3</accession>
<protein>
    <recommendedName>
        <fullName evidence="2">Photosystem I iron-sulfur center</fullName>
        <ecNumber evidence="2">1.97.1.12</ecNumber>
    </recommendedName>
    <alternativeName>
        <fullName evidence="2">9 kDa polypeptide</fullName>
    </alternativeName>
    <alternativeName>
        <fullName evidence="2">PSI-C</fullName>
    </alternativeName>
    <alternativeName>
        <fullName evidence="2">Photosystem I subunit VII</fullName>
    </alternativeName>
    <alternativeName>
        <fullName evidence="2">PsaC</fullName>
    </alternativeName>
</protein>